<keyword id="KW-0963">Cytoplasm</keyword>
<keyword id="KW-0489">Methyltransferase</keyword>
<keyword id="KW-1185">Reference proteome</keyword>
<keyword id="KW-0698">rRNA processing</keyword>
<keyword id="KW-0949">S-adenosyl-L-methionine</keyword>
<keyword id="KW-0808">Transferase</keyword>
<organism>
    <name type="scientific">Rhizobium meliloti (strain 1021)</name>
    <name type="common">Ensifer meliloti</name>
    <name type="synonym">Sinorhizobium meliloti</name>
    <dbReference type="NCBI Taxonomy" id="266834"/>
    <lineage>
        <taxon>Bacteria</taxon>
        <taxon>Pseudomonadati</taxon>
        <taxon>Pseudomonadota</taxon>
        <taxon>Alphaproteobacteria</taxon>
        <taxon>Hyphomicrobiales</taxon>
        <taxon>Rhizobiaceae</taxon>
        <taxon>Sinorhizobium/Ensifer group</taxon>
        <taxon>Sinorhizobium</taxon>
    </lineage>
</organism>
<dbReference type="EC" id="2.1.1.199" evidence="1"/>
<dbReference type="EMBL" id="AL591688">
    <property type="protein sequence ID" value="CAC46763.1"/>
    <property type="molecule type" value="Genomic_DNA"/>
</dbReference>
<dbReference type="RefSeq" id="NP_386290.1">
    <property type="nucleotide sequence ID" value="NC_003047.1"/>
</dbReference>
<dbReference type="RefSeq" id="WP_003529142.1">
    <property type="nucleotide sequence ID" value="NC_003047.1"/>
</dbReference>
<dbReference type="SMR" id="Q92NL4"/>
<dbReference type="EnsemblBacteria" id="CAC46763">
    <property type="protein sequence ID" value="CAC46763"/>
    <property type="gene ID" value="SMc01858"/>
</dbReference>
<dbReference type="KEGG" id="sme:SMc01858"/>
<dbReference type="PATRIC" id="fig|266834.11.peg.3650"/>
<dbReference type="eggNOG" id="COG0275">
    <property type="taxonomic scope" value="Bacteria"/>
</dbReference>
<dbReference type="HOGENOM" id="CLU_038422_1_1_5"/>
<dbReference type="OrthoDB" id="9806637at2"/>
<dbReference type="Proteomes" id="UP000001976">
    <property type="component" value="Chromosome"/>
</dbReference>
<dbReference type="GO" id="GO:0005737">
    <property type="term" value="C:cytoplasm"/>
    <property type="evidence" value="ECO:0007669"/>
    <property type="project" value="UniProtKB-SubCell"/>
</dbReference>
<dbReference type="GO" id="GO:0071424">
    <property type="term" value="F:rRNA (cytosine-N4-)-methyltransferase activity"/>
    <property type="evidence" value="ECO:0007669"/>
    <property type="project" value="UniProtKB-UniRule"/>
</dbReference>
<dbReference type="GO" id="GO:0070475">
    <property type="term" value="P:rRNA base methylation"/>
    <property type="evidence" value="ECO:0007669"/>
    <property type="project" value="UniProtKB-UniRule"/>
</dbReference>
<dbReference type="Gene3D" id="1.10.150.170">
    <property type="entry name" value="Putative methyltransferase TM0872, insert domain"/>
    <property type="match status" value="1"/>
</dbReference>
<dbReference type="Gene3D" id="3.40.50.150">
    <property type="entry name" value="Vaccinia Virus protein VP39"/>
    <property type="match status" value="1"/>
</dbReference>
<dbReference type="HAMAP" id="MF_01007">
    <property type="entry name" value="16SrRNA_methyltr_H"/>
    <property type="match status" value="1"/>
</dbReference>
<dbReference type="InterPro" id="IPR002903">
    <property type="entry name" value="RsmH"/>
</dbReference>
<dbReference type="InterPro" id="IPR023397">
    <property type="entry name" value="SAM-dep_MeTrfase_MraW_recog"/>
</dbReference>
<dbReference type="InterPro" id="IPR029063">
    <property type="entry name" value="SAM-dependent_MTases_sf"/>
</dbReference>
<dbReference type="NCBIfam" id="TIGR00006">
    <property type="entry name" value="16S rRNA (cytosine(1402)-N(4))-methyltransferase RsmH"/>
    <property type="match status" value="1"/>
</dbReference>
<dbReference type="PANTHER" id="PTHR11265:SF0">
    <property type="entry name" value="12S RRNA N4-METHYLCYTIDINE METHYLTRANSFERASE"/>
    <property type="match status" value="1"/>
</dbReference>
<dbReference type="PANTHER" id="PTHR11265">
    <property type="entry name" value="S-ADENOSYL-METHYLTRANSFERASE MRAW"/>
    <property type="match status" value="1"/>
</dbReference>
<dbReference type="Pfam" id="PF01795">
    <property type="entry name" value="Methyltransf_5"/>
    <property type="match status" value="1"/>
</dbReference>
<dbReference type="PIRSF" id="PIRSF004486">
    <property type="entry name" value="MraW"/>
    <property type="match status" value="1"/>
</dbReference>
<dbReference type="SUPFAM" id="SSF81799">
    <property type="entry name" value="Putative methyltransferase TM0872, insert domain"/>
    <property type="match status" value="1"/>
</dbReference>
<dbReference type="SUPFAM" id="SSF53335">
    <property type="entry name" value="S-adenosyl-L-methionine-dependent methyltransferases"/>
    <property type="match status" value="1"/>
</dbReference>
<gene>
    <name evidence="1" type="primary">rsmH</name>
    <name type="synonym">mraW</name>
    <name type="ordered locus">R02184</name>
    <name type="ORF">SMc01858</name>
</gene>
<sequence length="341" mass="36021">MVTDQGGGTSEADGGPVRHIPVLLKEVLAALDPAPGKIILDGTFGAGGYASAILDAGADVVALDRDPTAIAAGQSMMHASGGRLKLVHSRFSDLAEHAPAQGLDGVVLDIGVSSMQIDEAERGFSFQKKGPLDMRMSAAGVSAADVVNRAKVSDLIRIFGFLGEEKQAGRIARAIEKRRAETPFETTRDLANLIETVTPRKAKDKIHPATRVFQALRIFVNDELGELAHALFAAERALKPGGRLVVVTFHSLEDRIVKTFFQDRSGKAGGSRHLPLVTARAATFTPVGKPMVAASEEEASRNPRARSAKLRAGVRTEAPSPGADLSIFNLPELASLARLGG</sequence>
<proteinExistence type="inferred from homology"/>
<evidence type="ECO:0000255" key="1">
    <source>
        <dbReference type="HAMAP-Rule" id="MF_01007"/>
    </source>
</evidence>
<evidence type="ECO:0000256" key="2">
    <source>
        <dbReference type="SAM" id="MobiDB-lite"/>
    </source>
</evidence>
<feature type="chain" id="PRO_0000108690" description="Ribosomal RNA small subunit methyltransferase H">
    <location>
        <begin position="1"/>
        <end position="341"/>
    </location>
</feature>
<feature type="region of interest" description="Disordered" evidence="2">
    <location>
        <begin position="292"/>
        <end position="319"/>
    </location>
</feature>
<feature type="binding site" evidence="1">
    <location>
        <begin position="47"/>
        <end position="49"/>
    </location>
    <ligand>
        <name>S-adenosyl-L-methionine</name>
        <dbReference type="ChEBI" id="CHEBI:59789"/>
    </ligand>
</feature>
<feature type="binding site" evidence="1">
    <location>
        <position position="64"/>
    </location>
    <ligand>
        <name>S-adenosyl-L-methionine</name>
        <dbReference type="ChEBI" id="CHEBI:59789"/>
    </ligand>
</feature>
<feature type="binding site" evidence="1">
    <location>
        <position position="91"/>
    </location>
    <ligand>
        <name>S-adenosyl-L-methionine</name>
        <dbReference type="ChEBI" id="CHEBI:59789"/>
    </ligand>
</feature>
<feature type="binding site" evidence="1">
    <location>
        <position position="109"/>
    </location>
    <ligand>
        <name>S-adenosyl-L-methionine</name>
        <dbReference type="ChEBI" id="CHEBI:59789"/>
    </ligand>
</feature>
<feature type="binding site" evidence="1">
    <location>
        <position position="116"/>
    </location>
    <ligand>
        <name>S-adenosyl-L-methionine</name>
        <dbReference type="ChEBI" id="CHEBI:59789"/>
    </ligand>
</feature>
<name>RSMH_RHIME</name>
<accession>Q92NL4</accession>
<reference key="1">
    <citation type="journal article" date="2001" name="Proc. Natl. Acad. Sci. U.S.A.">
        <title>Analysis of the chromosome sequence of the legume symbiont Sinorhizobium meliloti strain 1021.</title>
        <authorList>
            <person name="Capela D."/>
            <person name="Barloy-Hubler F."/>
            <person name="Gouzy J."/>
            <person name="Bothe G."/>
            <person name="Ampe F."/>
            <person name="Batut J."/>
            <person name="Boistard P."/>
            <person name="Becker A."/>
            <person name="Boutry M."/>
            <person name="Cadieu E."/>
            <person name="Dreano S."/>
            <person name="Gloux S."/>
            <person name="Godrie T."/>
            <person name="Goffeau A."/>
            <person name="Kahn D."/>
            <person name="Kiss E."/>
            <person name="Lelaure V."/>
            <person name="Masuy D."/>
            <person name="Pohl T."/>
            <person name="Portetelle D."/>
            <person name="Puehler A."/>
            <person name="Purnelle B."/>
            <person name="Ramsperger U."/>
            <person name="Renard C."/>
            <person name="Thebault P."/>
            <person name="Vandenbol M."/>
            <person name="Weidner S."/>
            <person name="Galibert F."/>
        </authorList>
    </citation>
    <scope>NUCLEOTIDE SEQUENCE [LARGE SCALE GENOMIC DNA]</scope>
    <source>
        <strain>1021</strain>
    </source>
</reference>
<reference key="2">
    <citation type="journal article" date="2001" name="Science">
        <title>The composite genome of the legume symbiont Sinorhizobium meliloti.</title>
        <authorList>
            <person name="Galibert F."/>
            <person name="Finan T.M."/>
            <person name="Long S.R."/>
            <person name="Puehler A."/>
            <person name="Abola P."/>
            <person name="Ampe F."/>
            <person name="Barloy-Hubler F."/>
            <person name="Barnett M.J."/>
            <person name="Becker A."/>
            <person name="Boistard P."/>
            <person name="Bothe G."/>
            <person name="Boutry M."/>
            <person name="Bowser L."/>
            <person name="Buhrmester J."/>
            <person name="Cadieu E."/>
            <person name="Capela D."/>
            <person name="Chain P."/>
            <person name="Cowie A."/>
            <person name="Davis R.W."/>
            <person name="Dreano S."/>
            <person name="Federspiel N.A."/>
            <person name="Fisher R.F."/>
            <person name="Gloux S."/>
            <person name="Godrie T."/>
            <person name="Goffeau A."/>
            <person name="Golding B."/>
            <person name="Gouzy J."/>
            <person name="Gurjal M."/>
            <person name="Hernandez-Lucas I."/>
            <person name="Hong A."/>
            <person name="Huizar L."/>
            <person name="Hyman R.W."/>
            <person name="Jones T."/>
            <person name="Kahn D."/>
            <person name="Kahn M.L."/>
            <person name="Kalman S."/>
            <person name="Keating D.H."/>
            <person name="Kiss E."/>
            <person name="Komp C."/>
            <person name="Lelaure V."/>
            <person name="Masuy D."/>
            <person name="Palm C."/>
            <person name="Peck M.C."/>
            <person name="Pohl T.M."/>
            <person name="Portetelle D."/>
            <person name="Purnelle B."/>
            <person name="Ramsperger U."/>
            <person name="Surzycki R."/>
            <person name="Thebault P."/>
            <person name="Vandenbol M."/>
            <person name="Vorhoelter F.J."/>
            <person name="Weidner S."/>
            <person name="Wells D.H."/>
            <person name="Wong K."/>
            <person name="Yeh K.-C."/>
            <person name="Batut J."/>
        </authorList>
    </citation>
    <scope>NUCLEOTIDE SEQUENCE [LARGE SCALE GENOMIC DNA]</scope>
    <source>
        <strain>1021</strain>
    </source>
</reference>
<comment type="function">
    <text evidence="1">Specifically methylates the N4 position of cytidine in position 1402 (C1402) of 16S rRNA.</text>
</comment>
<comment type="catalytic activity">
    <reaction evidence="1">
        <text>cytidine(1402) in 16S rRNA + S-adenosyl-L-methionine = N(4)-methylcytidine(1402) in 16S rRNA + S-adenosyl-L-homocysteine + H(+)</text>
        <dbReference type="Rhea" id="RHEA:42928"/>
        <dbReference type="Rhea" id="RHEA-COMP:10286"/>
        <dbReference type="Rhea" id="RHEA-COMP:10287"/>
        <dbReference type="ChEBI" id="CHEBI:15378"/>
        <dbReference type="ChEBI" id="CHEBI:57856"/>
        <dbReference type="ChEBI" id="CHEBI:59789"/>
        <dbReference type="ChEBI" id="CHEBI:74506"/>
        <dbReference type="ChEBI" id="CHEBI:82748"/>
        <dbReference type="EC" id="2.1.1.199"/>
    </reaction>
</comment>
<comment type="subcellular location">
    <subcellularLocation>
        <location evidence="1">Cytoplasm</location>
    </subcellularLocation>
</comment>
<comment type="similarity">
    <text evidence="1">Belongs to the methyltransferase superfamily. RsmH family.</text>
</comment>
<protein>
    <recommendedName>
        <fullName evidence="1">Ribosomal RNA small subunit methyltransferase H</fullName>
        <ecNumber evidence="1">2.1.1.199</ecNumber>
    </recommendedName>
    <alternativeName>
        <fullName evidence="1">16S rRNA m(4)C1402 methyltransferase</fullName>
    </alternativeName>
    <alternativeName>
        <fullName evidence="1">rRNA (cytosine-N(4)-)-methyltransferase RsmH</fullName>
    </alternativeName>
</protein>